<sequence>MAPCRTMMVLLCFVLFLAASSSCVAAARIGATMEMKKNIKRLTFKNSHIFGYLPKGVPIPPSAPSKRHNSFVNSLPH</sequence>
<protein>
    <recommendedName>
        <fullName evidence="7">Protein IDA</fullName>
    </recommendedName>
    <alternativeName>
        <fullName evidence="7">Protein INFLORESCENCE DEFICIENT IN ABSCISSION</fullName>
    </alternativeName>
</protein>
<proteinExistence type="evidence at protein level"/>
<gene>
    <name evidence="7" type="primary">IDA</name>
    <name evidence="8" type="ordered locus">At1g68765</name>
    <name evidence="9" type="ORF">F14K14</name>
</gene>
<comment type="function">
    <text evidence="4 5 6">Involved in an ethylene-independent separation step of floral abscission (PubMed:18660431, PubMed:23963677, PubMed:27058169). Promotes abscission zone (AZ) cells rounding (PubMed:23963677, PubMed:27058169). May act with RLK5 and HSL2 as ligand-receptor pairs (PubMed:18660431).</text>
</comment>
<comment type="subunit">
    <text evidence="6">Interaction with RLK5.</text>
</comment>
<comment type="subcellular location">
    <subcellularLocation>
        <location evidence="2">Secreted</location>
        <location evidence="2">Extracellular space</location>
    </subcellularLocation>
</comment>
<comment type="tissue specificity">
    <text evidence="2">Expressed specifically in the floral abscission zone.</text>
</comment>
<comment type="developmental stage">
    <text evidence="2">Expressed only during floral abscission.</text>
</comment>
<comment type="induction">
    <text evidence="3">By wounding.</text>
</comment>
<comment type="domain">
    <text>An extended PIP motif (50-69) is sufficient for abscission induction.</text>
</comment>
<comment type="disruption phenotype">
    <text evidence="2 5">Floral organs remain attached to the plant body after the shedding of mature seeds despite a normal floral abscission zone development, including abnormal petal breakstrength (pBS) (PubMed:12972671, PubMed:23963677). Delayed cell-wall loosening during shedding associated with less pronounced and delayed abscission zone (AZ) cells rounding (PubMed:23963677).</text>
</comment>
<comment type="miscellaneous">
    <text>IDL1 is capable of replacing the activity of IDA while IDL2, IDL3, IDL4 and IDL5 are only partially redundant.</text>
</comment>
<comment type="miscellaneous">
    <text>IDA is processed in vitro by the same proteolytic activity releasing the CLE peptide from CLV3.</text>
</comment>
<organism>
    <name type="scientific">Arabidopsis thaliana</name>
    <name type="common">Mouse-ear cress</name>
    <dbReference type="NCBI Taxonomy" id="3702"/>
    <lineage>
        <taxon>Eukaryota</taxon>
        <taxon>Viridiplantae</taxon>
        <taxon>Streptophyta</taxon>
        <taxon>Embryophyta</taxon>
        <taxon>Tracheophyta</taxon>
        <taxon>Spermatophyta</taxon>
        <taxon>Magnoliopsida</taxon>
        <taxon>eudicotyledons</taxon>
        <taxon>Gunneridae</taxon>
        <taxon>Pentapetalae</taxon>
        <taxon>rosids</taxon>
        <taxon>malvids</taxon>
        <taxon>Brassicales</taxon>
        <taxon>Brassicaceae</taxon>
        <taxon>Camelineae</taxon>
        <taxon>Arabidopsis</taxon>
    </lineage>
</organism>
<feature type="signal peptide" evidence="1">
    <location>
        <begin position="1"/>
        <end position="26"/>
    </location>
</feature>
<feature type="chain" id="PRO_0000383588" description="Protein IDA">
    <location>
        <begin position="27"/>
        <end position="77"/>
    </location>
</feature>
<feature type="region of interest" description="RLK5-binding" evidence="6 10 11 12">
    <location>
        <begin position="56"/>
        <end position="69"/>
    </location>
</feature>
<feature type="mutagenesis site" description="Reduced activity leading to delayed floral abscission." evidence="6">
    <original>KR</original>
    <variation>AA</variation>
    <location>
        <begin position="66"/>
        <end position="67"/>
    </location>
</feature>
<feature type="mutagenesis site" description="Reduced binding affinity for RLK5." evidence="6">
    <original>K</original>
    <variation>A</variation>
    <location>
        <position position="66"/>
    </location>
</feature>
<reference key="1">
    <citation type="journal article" date="2000" name="Nature">
        <title>Sequence and analysis of chromosome 1 of the plant Arabidopsis thaliana.</title>
        <authorList>
            <person name="Theologis A."/>
            <person name="Ecker J.R."/>
            <person name="Palm C.J."/>
            <person name="Federspiel N.A."/>
            <person name="Kaul S."/>
            <person name="White O."/>
            <person name="Alonso J."/>
            <person name="Altafi H."/>
            <person name="Araujo R."/>
            <person name="Bowman C.L."/>
            <person name="Brooks S.Y."/>
            <person name="Buehler E."/>
            <person name="Chan A."/>
            <person name="Chao Q."/>
            <person name="Chen H."/>
            <person name="Cheuk R.F."/>
            <person name="Chin C.W."/>
            <person name="Chung M.K."/>
            <person name="Conn L."/>
            <person name="Conway A.B."/>
            <person name="Conway A.R."/>
            <person name="Creasy T.H."/>
            <person name="Dewar K."/>
            <person name="Dunn P."/>
            <person name="Etgu P."/>
            <person name="Feldblyum T.V."/>
            <person name="Feng J.-D."/>
            <person name="Fong B."/>
            <person name="Fujii C.Y."/>
            <person name="Gill J.E."/>
            <person name="Goldsmith A.D."/>
            <person name="Haas B."/>
            <person name="Hansen N.F."/>
            <person name="Hughes B."/>
            <person name="Huizar L."/>
            <person name="Hunter J.L."/>
            <person name="Jenkins J."/>
            <person name="Johnson-Hopson C."/>
            <person name="Khan S."/>
            <person name="Khaykin E."/>
            <person name="Kim C.J."/>
            <person name="Koo H.L."/>
            <person name="Kremenetskaia I."/>
            <person name="Kurtz D.B."/>
            <person name="Kwan A."/>
            <person name="Lam B."/>
            <person name="Langin-Hooper S."/>
            <person name="Lee A."/>
            <person name="Lee J.M."/>
            <person name="Lenz C.A."/>
            <person name="Li J.H."/>
            <person name="Li Y.-P."/>
            <person name="Lin X."/>
            <person name="Liu S.X."/>
            <person name="Liu Z.A."/>
            <person name="Luros J.S."/>
            <person name="Maiti R."/>
            <person name="Marziali A."/>
            <person name="Militscher J."/>
            <person name="Miranda M."/>
            <person name="Nguyen M."/>
            <person name="Nierman W.C."/>
            <person name="Osborne B.I."/>
            <person name="Pai G."/>
            <person name="Peterson J."/>
            <person name="Pham P.K."/>
            <person name="Rizzo M."/>
            <person name="Rooney T."/>
            <person name="Rowley D."/>
            <person name="Sakano H."/>
            <person name="Salzberg S.L."/>
            <person name="Schwartz J.R."/>
            <person name="Shinn P."/>
            <person name="Southwick A.M."/>
            <person name="Sun H."/>
            <person name="Tallon L.J."/>
            <person name="Tambunga G."/>
            <person name="Toriumi M.J."/>
            <person name="Town C.D."/>
            <person name="Utterback T."/>
            <person name="Van Aken S."/>
            <person name="Vaysberg M."/>
            <person name="Vysotskaia V.S."/>
            <person name="Walker M."/>
            <person name="Wu D."/>
            <person name="Yu G."/>
            <person name="Fraser C.M."/>
            <person name="Venter J.C."/>
            <person name="Davis R.W."/>
        </authorList>
    </citation>
    <scope>NUCLEOTIDE SEQUENCE [LARGE SCALE GENOMIC DNA]</scope>
    <source>
        <strain>cv. Columbia</strain>
    </source>
</reference>
<reference key="2">
    <citation type="journal article" date="2017" name="Plant J.">
        <title>Araport11: a complete reannotation of the Arabidopsis thaliana reference genome.</title>
        <authorList>
            <person name="Cheng C.Y."/>
            <person name="Krishnakumar V."/>
            <person name="Chan A.P."/>
            <person name="Thibaud-Nissen F."/>
            <person name="Schobel S."/>
            <person name="Town C.D."/>
        </authorList>
    </citation>
    <scope>GENOME REANNOTATION</scope>
    <source>
        <strain>cv. Columbia</strain>
    </source>
</reference>
<reference key="3">
    <citation type="submission" date="2002-03" db="EMBL/GenBank/DDBJ databases">
        <title>Full-length cDNA from Arabidopsis thaliana.</title>
        <authorList>
            <person name="Brover V.V."/>
            <person name="Troukhan M.E."/>
            <person name="Alexandrov N.A."/>
            <person name="Lu Y.-P."/>
            <person name="Flavell R.B."/>
            <person name="Feldmann K.A."/>
        </authorList>
    </citation>
    <scope>NUCLEOTIDE SEQUENCE [LARGE SCALE MRNA]</scope>
</reference>
<reference key="4">
    <citation type="submission" date="2006-05" db="EMBL/GenBank/DDBJ databases">
        <title>Arabidopsis ORF clones.</title>
        <authorList>
            <person name="Shinn P."/>
            <person name="Chen H."/>
            <person name="Kim C.J."/>
            <person name="Quinitio C."/>
            <person name="Ecker J.R."/>
        </authorList>
    </citation>
    <scope>NUCLEOTIDE SEQUENCE [LARGE SCALE MRNA]</scope>
</reference>
<reference key="5">
    <citation type="journal article" date="2003" name="Plant Cell">
        <title>Inflorescence deficient in abscission controls floral organ abscission in Arabidopsis and identifies a novel family of putative ligands in plants.</title>
        <authorList>
            <person name="Butenko M.A."/>
            <person name="Patterson S.E."/>
            <person name="Grini P.E."/>
            <person name="Stenvik G.-E."/>
            <person name="Amundsen S.S."/>
            <person name="Mandal A."/>
            <person name="Aalen R.B."/>
        </authorList>
    </citation>
    <scope>IDENTIFICATION</scope>
    <scope>DISRUPTION PHENOTYPE</scope>
    <scope>TISSUE SPECIFICITY</scope>
    <scope>DEVELOPMENTAL STAGE</scope>
    <scope>SUBCELLULAR LOCATION</scope>
</reference>
<reference key="6">
    <citation type="journal article" date="2006" name="J. Exp. Bot.">
        <title>Ethylene-dependent and -independent pathways controlling floral abscission are revealed to converge using promoter::reporter gene constructs in the ida abscission mutant.</title>
        <authorList>
            <person name="Butenko M.A."/>
            <person name="Stenvik G.-E."/>
            <person name="Alm V."/>
            <person name="Saether B."/>
            <person name="Patterson S.E."/>
            <person name="Aalen R.B."/>
        </authorList>
    </citation>
    <scope>INDUCTION BY WOUNDING</scope>
</reference>
<reference key="7">
    <citation type="journal article" date="2008" name="Plant Cell">
        <title>The EPIP peptide of INFLORESCENCE DEFICIENT IN ABSCISSION is sufficient to induce abscission in arabidopsis through the receptor-like kinases HAESA and HAESA-LIKE2.</title>
        <authorList>
            <person name="Stenvik G.-E."/>
            <person name="Tandstad N.M."/>
            <person name="Guo Y."/>
            <person name="Shi C.-L."/>
            <person name="Kristiansen W."/>
            <person name="Holmgren A."/>
            <person name="Clark S.E."/>
            <person name="Aalen R.B."/>
            <person name="Butenko M.A."/>
        </authorList>
    </citation>
    <scope>FUNCTION</scope>
</reference>
<reference key="8">
    <citation type="journal article" date="2013" name="J. Exp. Bot.">
        <title>NEVERSHED and INFLORESCENCE DEFICIENT IN ABSCISSION are differentially required for cell expansion and cell separation during floral organ abscission in Arabidopsis thaliana.</title>
        <authorList>
            <person name="Liu B."/>
            <person name="Butenko M.A."/>
            <person name="Shi C.-L."/>
            <person name="Bolivar J.L."/>
            <person name="Winge P."/>
            <person name="Stenvik G.-E."/>
            <person name="Vie A.K."/>
            <person name="Leslie M.E."/>
            <person name="Brembu T."/>
            <person name="Kristiansen W."/>
            <person name="Bones A.M."/>
            <person name="Patterson S.E."/>
            <person name="Liljegren S.J."/>
            <person name="Aalen R.B."/>
        </authorList>
    </citation>
    <scope>FUNCTION</scope>
    <scope>DISRUPTION PHENOTYPE</scope>
    <source>
        <strain>cv. C24</strain>
        <strain>cv. Columbia</strain>
        <strain>cv. Landsberg erecta</strain>
    </source>
</reference>
<reference key="9">
    <citation type="journal article" date="2016" name="Elife">
        <title>Mechanistic insight into a peptide hormone signaling complex mediating floral organ abscission.</title>
        <authorList>
            <person name="Santiago J."/>
            <person name="Brandt B."/>
            <person name="Wildhagen M."/>
            <person name="Hohmann U."/>
            <person name="Hothorn L.A."/>
            <person name="Butenko M.A."/>
            <person name="Hothorn M."/>
        </authorList>
    </citation>
    <scope>X-RAY CRYSTALLOGRAPHY (1.86 ANGSTROMS) OF 58-69 IN COMPLEX WITH RLK5</scope>
    <scope>FUNCTION</scope>
    <scope>INTERACTION WITH RLK5</scope>
    <scope>MUTAGENESIS OF LYS-66 AND 66-LYS-ARG-67</scope>
</reference>
<name>IDA_ARATH</name>
<accession>Q8LAD7</accession>
<keyword id="KW-0002">3D-structure</keyword>
<keyword id="KW-1185">Reference proteome</keyword>
<keyword id="KW-0964">Secreted</keyword>
<keyword id="KW-0732">Signal</keyword>
<evidence type="ECO:0000255" key="1"/>
<evidence type="ECO:0000269" key="2">
    <source>
    </source>
</evidence>
<evidence type="ECO:0000269" key="3">
    <source>
    </source>
</evidence>
<evidence type="ECO:0000269" key="4">
    <source>
    </source>
</evidence>
<evidence type="ECO:0000269" key="5">
    <source>
    </source>
</evidence>
<evidence type="ECO:0000269" key="6">
    <source>
    </source>
</evidence>
<evidence type="ECO:0000303" key="7">
    <source>
    </source>
</evidence>
<evidence type="ECO:0000312" key="8">
    <source>
        <dbReference type="Araport" id="AT1G68765"/>
    </source>
</evidence>
<evidence type="ECO:0000312" key="9">
    <source>
        <dbReference type="EMBL" id="AC011914"/>
    </source>
</evidence>
<evidence type="ECO:0007744" key="10">
    <source>
        <dbReference type="PDB" id="5IXQ"/>
    </source>
</evidence>
<evidence type="ECO:0007744" key="11">
    <source>
        <dbReference type="PDB" id="5IXT"/>
    </source>
</evidence>
<evidence type="ECO:0007744" key="12">
    <source>
        <dbReference type="PDB" id="5IYX"/>
    </source>
</evidence>
<dbReference type="EMBL" id="AC011914">
    <property type="status" value="NOT_ANNOTATED_CDS"/>
    <property type="molecule type" value="Genomic_DNA"/>
</dbReference>
<dbReference type="EMBL" id="CP002684">
    <property type="protein sequence ID" value="AEE34837.1"/>
    <property type="molecule type" value="Genomic_DNA"/>
</dbReference>
<dbReference type="EMBL" id="AY087883">
    <property type="protein sequence ID" value="AAM65435.1"/>
    <property type="molecule type" value="mRNA"/>
</dbReference>
<dbReference type="EMBL" id="BT025310">
    <property type="protein sequence ID" value="ABF47126.1"/>
    <property type="molecule type" value="mRNA"/>
</dbReference>
<dbReference type="RefSeq" id="NP_564941.1">
    <property type="nucleotide sequence ID" value="NM_105550.2"/>
</dbReference>
<dbReference type="PDB" id="5IXQ">
    <property type="method" value="X-ray"/>
    <property type="resolution" value="1.86 A"/>
    <property type="chains" value="B=58-69"/>
</dbReference>
<dbReference type="PDB" id="5IXT">
    <property type="method" value="X-ray"/>
    <property type="resolution" value="1.94 A"/>
    <property type="chains" value="B=54-69"/>
</dbReference>
<dbReference type="PDB" id="5IYX">
    <property type="method" value="X-ray"/>
    <property type="resolution" value="2.43 A"/>
    <property type="chains" value="B=56-69"/>
</dbReference>
<dbReference type="PDB" id="7ODV">
    <property type="method" value="X-ray"/>
    <property type="resolution" value="2.31 A"/>
    <property type="chains" value="CCC/FFF=57-69"/>
</dbReference>
<dbReference type="PDBsum" id="5IXQ"/>
<dbReference type="PDBsum" id="5IXT"/>
<dbReference type="PDBsum" id="5IYX"/>
<dbReference type="PDBsum" id="7ODV"/>
<dbReference type="SMR" id="Q8LAD7"/>
<dbReference type="STRING" id="3702.Q8LAD7"/>
<dbReference type="PaxDb" id="3702-AT1G68765.1"/>
<dbReference type="EnsemblPlants" id="AT1G68765.1">
    <property type="protein sequence ID" value="AT1G68765.1"/>
    <property type="gene ID" value="AT1G68765"/>
</dbReference>
<dbReference type="GeneID" id="843208"/>
<dbReference type="Gramene" id="AT1G68765.1">
    <property type="protein sequence ID" value="AT1G68765.1"/>
    <property type="gene ID" value="AT1G68765"/>
</dbReference>
<dbReference type="KEGG" id="ath:AT1G68765"/>
<dbReference type="Araport" id="AT1G68765"/>
<dbReference type="TAIR" id="AT1G68765">
    <property type="gene designation" value="IDA"/>
</dbReference>
<dbReference type="eggNOG" id="ENOG502S9CH">
    <property type="taxonomic scope" value="Eukaryota"/>
</dbReference>
<dbReference type="HOGENOM" id="CLU_180384_0_0_1"/>
<dbReference type="InParanoid" id="Q8LAD7"/>
<dbReference type="OMA" id="GATMEMK"/>
<dbReference type="OrthoDB" id="994133at2759"/>
<dbReference type="PhylomeDB" id="Q8LAD7"/>
<dbReference type="EvolutionaryTrace" id="Q8LAD7"/>
<dbReference type="PRO" id="PR:Q8LAD7"/>
<dbReference type="Proteomes" id="UP000006548">
    <property type="component" value="Chromosome 1"/>
</dbReference>
<dbReference type="ExpressionAtlas" id="Q8LAD7">
    <property type="expression patterns" value="baseline and differential"/>
</dbReference>
<dbReference type="GO" id="GO:0048046">
    <property type="term" value="C:apoplast"/>
    <property type="evidence" value="ECO:0000304"/>
    <property type="project" value="TAIR"/>
</dbReference>
<dbReference type="GO" id="GO:0005576">
    <property type="term" value="C:extracellular region"/>
    <property type="evidence" value="ECO:0000314"/>
    <property type="project" value="TAIR"/>
</dbReference>
<dbReference type="GO" id="GO:0005102">
    <property type="term" value="F:signaling receptor binding"/>
    <property type="evidence" value="ECO:0000304"/>
    <property type="project" value="TAIR"/>
</dbReference>
<dbReference type="GO" id="GO:0050829">
    <property type="term" value="P:defense response to Gram-negative bacterium"/>
    <property type="evidence" value="ECO:0000315"/>
    <property type="project" value="TAIR"/>
</dbReference>
<dbReference type="GO" id="GO:0010227">
    <property type="term" value="P:floral organ abscission"/>
    <property type="evidence" value="ECO:0000315"/>
    <property type="project" value="UniProtKB"/>
</dbReference>
<dbReference type="GO" id="GO:0010102">
    <property type="term" value="P:lateral root morphogenesis"/>
    <property type="evidence" value="ECO:0000315"/>
    <property type="project" value="TAIR"/>
</dbReference>
<dbReference type="GO" id="GO:0060866">
    <property type="term" value="P:leaf abscission"/>
    <property type="evidence" value="ECO:0000315"/>
    <property type="project" value="TAIR"/>
</dbReference>
<dbReference type="GO" id="GO:0045490">
    <property type="term" value="P:pectin catabolic process"/>
    <property type="evidence" value="ECO:0000315"/>
    <property type="project" value="TAIR"/>
</dbReference>
<dbReference type="GO" id="GO:0060305">
    <property type="term" value="P:regulation of cell diameter"/>
    <property type="evidence" value="ECO:0000315"/>
    <property type="project" value="UniProtKB"/>
</dbReference>
<dbReference type="GO" id="GO:0010468">
    <property type="term" value="P:regulation of gene expression"/>
    <property type="evidence" value="ECO:0000316"/>
    <property type="project" value="TAIR"/>
</dbReference>
<dbReference type="GO" id="GO:0009723">
    <property type="term" value="P:response to ethylene"/>
    <property type="evidence" value="ECO:0000315"/>
    <property type="project" value="TAIR"/>
</dbReference>
<dbReference type="InterPro" id="IPR039639">
    <property type="entry name" value="IDA-like"/>
</dbReference>
<dbReference type="PANTHER" id="PTHR33599:SF20">
    <property type="entry name" value="PROTEIN IDA"/>
    <property type="match status" value="1"/>
</dbReference>
<dbReference type="PANTHER" id="PTHR33599">
    <property type="entry name" value="PROTEIN IDA-LIKE 5"/>
    <property type="match status" value="1"/>
</dbReference>